<sequence>MSNYAPFIKPYVEYNEHGWGPCEVPELDVPYQPFCKGDRLGKICDWTVSLPEKKFPSKYASTFGNSSQYAYFYEDDDSTFHLVDTTGSKAFKPYQRGRYRPNVRNNVRARGRTGRGSQAVGGPGGPAAGGSTANSTKYGKGRNTRNTQNVGRRFGRSAPTRLRESSVMVQSDWVSIEEIDFARLLKLALPNIKEGKDIATCGSLEYYDKLYDRVNLRNEKPLLKMDRVVHTVTTTDDPVIRRLSKTMGNVFATDEILATIMCCTRSNYSWDVVIEKLGTKVFLDKRDNDQFDLLTVNETSLEPPMDEEGSINSAHSLAMEATLINHNFSQQVLRIGDQEPRFKFEEPNPFEEQGVDLASMGYRYRQWDLGNEVVLIARCKHNGVIQGPNGEMQFLSIKALNEWDSKGSNSVEWRQKLDTQRGAVLASELRNNACKLARWTVEAVLAGSDQLKLGYVSRVNPRDHLRHVILGTQQFKPQEFATQINLNMDNAWGVLRCLIDIVMKQPDGKYLIMKDPNKSMIRLYDIPENAFDSDCNDDTESSETFVHSNDN</sequence>
<feature type="chain" id="PRO_0000364145" description="Eukaryotic translation initiation factor 3 subunit D-2">
    <location>
        <begin position="1"/>
        <end position="551"/>
    </location>
</feature>
<feature type="region of interest" description="Disordered" evidence="3">
    <location>
        <begin position="105"/>
        <end position="152"/>
    </location>
</feature>
<feature type="region of interest" description="RNA gate" evidence="1">
    <location>
        <begin position="290"/>
        <end position="304"/>
    </location>
</feature>
<feature type="compositionally biased region" description="Gly residues" evidence="3">
    <location>
        <begin position="119"/>
        <end position="128"/>
    </location>
</feature>
<keyword id="KW-0963">Cytoplasm</keyword>
<keyword id="KW-0396">Initiation factor</keyword>
<keyword id="KW-0648">Protein biosynthesis</keyword>
<keyword id="KW-0694">RNA-binding</keyword>
<organism>
    <name type="scientific">Drosophila erecta</name>
    <name type="common">Fruit fly</name>
    <dbReference type="NCBI Taxonomy" id="7220"/>
    <lineage>
        <taxon>Eukaryota</taxon>
        <taxon>Metazoa</taxon>
        <taxon>Ecdysozoa</taxon>
        <taxon>Arthropoda</taxon>
        <taxon>Hexapoda</taxon>
        <taxon>Insecta</taxon>
        <taxon>Pterygota</taxon>
        <taxon>Neoptera</taxon>
        <taxon>Endopterygota</taxon>
        <taxon>Diptera</taxon>
        <taxon>Brachycera</taxon>
        <taxon>Muscomorpha</taxon>
        <taxon>Ephydroidea</taxon>
        <taxon>Drosophilidae</taxon>
        <taxon>Drosophila</taxon>
        <taxon>Sophophora</taxon>
    </lineage>
</organism>
<dbReference type="EMBL" id="CH954181">
    <property type="protein sequence ID" value="EDV49418.1"/>
    <property type="molecule type" value="Genomic_DNA"/>
</dbReference>
<dbReference type="SMR" id="B3P1F9"/>
<dbReference type="EnsemblMetazoa" id="FBtr0137209">
    <property type="protein sequence ID" value="FBpp0135701"/>
    <property type="gene ID" value="FBgn0109382"/>
</dbReference>
<dbReference type="EnsemblMetazoa" id="XM_001980424.3">
    <property type="protein sequence ID" value="XP_001980460.1"/>
    <property type="gene ID" value="LOC6553887"/>
</dbReference>
<dbReference type="GeneID" id="6553887"/>
<dbReference type="KEGG" id="der:6553887"/>
<dbReference type="CTD" id="41475"/>
<dbReference type="eggNOG" id="KOG2479">
    <property type="taxonomic scope" value="Eukaryota"/>
</dbReference>
<dbReference type="HOGENOM" id="CLU_024521_2_0_1"/>
<dbReference type="OMA" id="CKHNGVI"/>
<dbReference type="OrthoDB" id="16538at2759"/>
<dbReference type="PhylomeDB" id="B3P1F9"/>
<dbReference type="Proteomes" id="UP000008711">
    <property type="component" value="Unassembled WGS sequence"/>
</dbReference>
<dbReference type="GO" id="GO:0016282">
    <property type="term" value="C:eukaryotic 43S preinitiation complex"/>
    <property type="evidence" value="ECO:0007669"/>
    <property type="project" value="UniProtKB-UniRule"/>
</dbReference>
<dbReference type="GO" id="GO:0033290">
    <property type="term" value="C:eukaryotic 48S preinitiation complex"/>
    <property type="evidence" value="ECO:0007669"/>
    <property type="project" value="UniProtKB-UniRule"/>
</dbReference>
<dbReference type="GO" id="GO:0005852">
    <property type="term" value="C:eukaryotic translation initiation factor 3 complex"/>
    <property type="evidence" value="ECO:0000250"/>
    <property type="project" value="UniProtKB"/>
</dbReference>
<dbReference type="GO" id="GO:0098808">
    <property type="term" value="F:mRNA cap binding"/>
    <property type="evidence" value="ECO:0007669"/>
    <property type="project" value="UniProtKB-UniRule"/>
</dbReference>
<dbReference type="GO" id="GO:0003743">
    <property type="term" value="F:translation initiation factor activity"/>
    <property type="evidence" value="ECO:0000250"/>
    <property type="project" value="UniProtKB"/>
</dbReference>
<dbReference type="GO" id="GO:0002191">
    <property type="term" value="P:cap-dependent translational initiation"/>
    <property type="evidence" value="ECO:0007669"/>
    <property type="project" value="UniProtKB-UniRule"/>
</dbReference>
<dbReference type="GO" id="GO:0001732">
    <property type="term" value="P:formation of cytoplasmic translation initiation complex"/>
    <property type="evidence" value="ECO:0007669"/>
    <property type="project" value="UniProtKB-UniRule"/>
</dbReference>
<dbReference type="GO" id="GO:0006446">
    <property type="term" value="P:regulation of translational initiation"/>
    <property type="evidence" value="ECO:0000250"/>
    <property type="project" value="UniProtKB"/>
</dbReference>
<dbReference type="HAMAP" id="MF_03003">
    <property type="entry name" value="eIF3d"/>
    <property type="match status" value="1"/>
</dbReference>
<dbReference type="InterPro" id="IPR007783">
    <property type="entry name" value="eIF3d"/>
</dbReference>
<dbReference type="PANTHER" id="PTHR12399">
    <property type="entry name" value="EUKARYOTIC TRANSLATION INITIATION FACTOR 3 SUBUNIT 7"/>
    <property type="match status" value="1"/>
</dbReference>
<dbReference type="PANTHER" id="PTHR12399:SF0">
    <property type="entry name" value="EUKARYOTIC TRANSLATION INITIATION FACTOR 3 SUBUNIT D"/>
    <property type="match status" value="1"/>
</dbReference>
<dbReference type="Pfam" id="PF05091">
    <property type="entry name" value="eIF-3_zeta"/>
    <property type="match status" value="1"/>
</dbReference>
<dbReference type="PIRSF" id="PIRSF016281">
    <property type="entry name" value="EIF-3_zeta"/>
    <property type="match status" value="1"/>
</dbReference>
<protein>
    <recommendedName>
        <fullName evidence="2">Eukaryotic translation initiation factor 3 subunit D-2</fullName>
        <shortName evidence="2">eIF3d-2</shortName>
    </recommendedName>
    <alternativeName>
        <fullName evidence="2">Eukaryotic translation initiation factor 3 subunit 7-2</fullName>
    </alternativeName>
</protein>
<gene>
    <name evidence="2" type="primary">eIF3d2</name>
    <name evidence="2" type="synonym">eIF3-S7-2</name>
    <name type="ORF">GG17155</name>
</gene>
<evidence type="ECO:0000250" key="1">
    <source>
        <dbReference type="UniProtKB" id="K7IM66"/>
    </source>
</evidence>
<evidence type="ECO:0000255" key="2">
    <source>
        <dbReference type="HAMAP-Rule" id="MF_03003"/>
    </source>
</evidence>
<evidence type="ECO:0000256" key="3">
    <source>
        <dbReference type="SAM" id="MobiDB-lite"/>
    </source>
</evidence>
<name>EI3D2_DROER</name>
<accession>B3P1F9</accession>
<comment type="function">
    <text evidence="2">mRNA cap-binding component of the eukaryotic translation initiation factor 3 (eIF-3) complex, which is involved in protein synthesis of a specialized repertoire of mRNAs and, together with other initiation factors, stimulates binding of mRNA and methionyl-tRNAi to the 40S ribosome. The eIF-3 complex specifically targets and initiates translation of a subset of mRNAs involved in cell proliferation. In the eIF-3 complex, eif3d specifically recognizes and binds the 7-methylguanosine cap of a subset of mRNAs.</text>
</comment>
<comment type="subunit">
    <text evidence="2">Component of the eukaryotic translation initiation factor 3 (eIF-3) complex. The eIF-3 complex interacts with pix.</text>
</comment>
<comment type="subcellular location">
    <subcellularLocation>
        <location evidence="2">Cytoplasm</location>
    </subcellularLocation>
</comment>
<comment type="domain">
    <text evidence="2">The RNA gate region regulates mRNA cap recognition to prevent promiscuous mRNA-binding before assembly of eif3d into the full eukaryotic translation initiation factor 3 (eIF-3) complex.</text>
</comment>
<comment type="similarity">
    <text evidence="2">Belongs to the eIF-3 subunit D family.</text>
</comment>
<proteinExistence type="inferred from homology"/>
<reference key="1">
    <citation type="journal article" date="2007" name="Nature">
        <title>Evolution of genes and genomes on the Drosophila phylogeny.</title>
        <authorList>
            <consortium name="Drosophila 12 genomes consortium"/>
        </authorList>
    </citation>
    <scope>NUCLEOTIDE SEQUENCE [LARGE SCALE GENOMIC DNA]</scope>
    <source>
        <strain>Tucson 14021-0224.01</strain>
    </source>
</reference>